<keyword id="KW-0328">Glycosyltransferase</keyword>
<keyword id="KW-1185">Reference proteome</keyword>
<keyword id="KW-0808">Transferase</keyword>
<dbReference type="EC" id="2.4.-.-"/>
<dbReference type="EMBL" id="AJ567472">
    <property type="protein sequence ID" value="CAD98955.1"/>
    <property type="molecule type" value="Genomic_DNA"/>
</dbReference>
<dbReference type="RefSeq" id="YP_003751.1">
    <property type="nucleotide sequence ID" value="NC_005830.1"/>
</dbReference>
<dbReference type="SMR" id="Q70LC5"/>
<dbReference type="CAZy" id="GT4">
    <property type="family name" value="Glycosyltransferase Family 4"/>
</dbReference>
<dbReference type="KEGG" id="vg:2769192"/>
<dbReference type="Proteomes" id="UP000000514">
    <property type="component" value="Genome"/>
</dbReference>
<dbReference type="GO" id="GO:0016757">
    <property type="term" value="F:glycosyltransferase activity"/>
    <property type="evidence" value="ECO:0007669"/>
    <property type="project" value="UniProtKB-KW"/>
</dbReference>
<dbReference type="Gene3D" id="3.40.50.2000">
    <property type="entry name" value="Glycogen Phosphorylase B"/>
    <property type="match status" value="1"/>
</dbReference>
<dbReference type="InterPro" id="IPR001296">
    <property type="entry name" value="Glyco_trans_1"/>
</dbReference>
<dbReference type="Pfam" id="PF00534">
    <property type="entry name" value="Glycos_transf_1"/>
    <property type="match status" value="1"/>
</dbReference>
<dbReference type="SUPFAM" id="SSF53756">
    <property type="entry name" value="UDP-Glycosyltransferase/glycogen phosphorylase"/>
    <property type="match status" value="1"/>
</dbReference>
<reference key="1">
    <citation type="journal article" date="2003" name="Virology">
        <title>AFV1, a novel virus infecting hyperthermophilic archaea of the genus acidianus.</title>
        <authorList>
            <person name="Bettstetter M."/>
            <person name="Peng X."/>
            <person name="Garrett R.A."/>
            <person name="Prangishvili D."/>
        </authorList>
    </citation>
    <scope>NUCLEOTIDE SEQUENCE [GENOMIC DNA]</scope>
</reference>
<accession>Q70LC5</accession>
<comment type="similarity">
    <text evidence="1">Belongs to the glycosyltransferase group 1 family. Glycosyltransferase 4 subfamily.</text>
</comment>
<sequence>MTSMLEIYSGCRACSYDYLSVLYEQYFRKNGIEAKYVGTLVRPTDSQKFLIDDILHGSHELMRQRKKVDFFRGDSVLYPWYDFHIDSILIVPSNWNAEQYSKYFRKTYVLPHFVNDDAVEMIVRNEERLKEDKLRNIQYSFLTIGHNNDFDRKGIVLAKRLMDRLGISNKLVCYSNEPFCHKEHRLTEVGKYREYYRAKFYVSLSYSESFGMTPFEAMAVGTPVIYPNCHAYAEYFKGEVGLPINCQGHSIMRIGDKDYNVWYFDIDEAKEIIQYADSMSDEEYIDMSIKTFEFAKQFYARNIIPKLIEIMKS</sequence>
<organismHost>
    <name type="scientific">Acidianus hospitalis</name>
    <dbReference type="NCBI Taxonomy" id="563177"/>
</organismHost>
<organismHost>
    <name type="scientific">Acidianus infernus</name>
    <dbReference type="NCBI Taxonomy" id="12915"/>
</organismHost>
<name>GT313_AFV1Y</name>
<organism>
    <name type="scientific">Acidianus filamentous virus 1 (isolate United States/Yellowstone)</name>
    <name type="common">AFV-1</name>
    <dbReference type="NCBI Taxonomy" id="654909"/>
    <lineage>
        <taxon>Viruses</taxon>
        <taxon>Adnaviria</taxon>
        <taxon>Zilligvirae</taxon>
        <taxon>Taleaviricota</taxon>
        <taxon>Tokiviricetes</taxon>
        <taxon>Ligamenvirales</taxon>
        <taxon>Ungulaviridae</taxon>
        <taxon>Captovirus</taxon>
        <taxon>Acidianus filamentous virus 1</taxon>
    </lineage>
</organism>
<proteinExistence type="inferred from homology"/>
<protein>
    <recommendedName>
        <fullName>Putative glycosyltransferase ORF313</fullName>
        <ecNumber>2.4.-.-</ecNumber>
    </recommendedName>
</protein>
<feature type="chain" id="PRO_0000384533" description="Putative glycosyltransferase ORF313">
    <location>
        <begin position="1"/>
        <end position="313"/>
    </location>
</feature>
<gene>
    <name type="ORF">ORF313</name>
</gene>
<evidence type="ECO:0000305" key="1"/>